<name>RPOB_SHESH</name>
<feature type="chain" id="PRO_1000086382" description="DNA-directed RNA polymerase subunit beta">
    <location>
        <begin position="1"/>
        <end position="1343"/>
    </location>
</feature>
<reference key="1">
    <citation type="submission" date="2007-08" db="EMBL/GenBank/DDBJ databases">
        <title>Complete sequence of Shewanella sediminis HAW-EB3.</title>
        <authorList>
            <consortium name="US DOE Joint Genome Institute"/>
            <person name="Copeland A."/>
            <person name="Lucas S."/>
            <person name="Lapidus A."/>
            <person name="Barry K."/>
            <person name="Glavina del Rio T."/>
            <person name="Dalin E."/>
            <person name="Tice H."/>
            <person name="Pitluck S."/>
            <person name="Chertkov O."/>
            <person name="Brettin T."/>
            <person name="Bruce D."/>
            <person name="Detter J.C."/>
            <person name="Han C."/>
            <person name="Schmutz J."/>
            <person name="Larimer F."/>
            <person name="Land M."/>
            <person name="Hauser L."/>
            <person name="Kyrpides N."/>
            <person name="Kim E."/>
            <person name="Zhao J.-S."/>
            <person name="Richardson P."/>
        </authorList>
    </citation>
    <scope>NUCLEOTIDE SEQUENCE [LARGE SCALE GENOMIC DNA]</scope>
    <source>
        <strain>HAW-EB3</strain>
    </source>
</reference>
<gene>
    <name evidence="1" type="primary">rpoB</name>
    <name type="ordered locus">Ssed_4324</name>
</gene>
<protein>
    <recommendedName>
        <fullName evidence="1">DNA-directed RNA polymerase subunit beta</fullName>
        <shortName evidence="1">RNAP subunit beta</shortName>
        <ecNumber evidence="1">2.7.7.6</ecNumber>
    </recommendedName>
    <alternativeName>
        <fullName evidence="1">RNA polymerase subunit beta</fullName>
    </alternativeName>
    <alternativeName>
        <fullName evidence="1">Transcriptase subunit beta</fullName>
    </alternativeName>
</protein>
<dbReference type="EC" id="2.7.7.6" evidence="1"/>
<dbReference type="EMBL" id="CP000821">
    <property type="protein sequence ID" value="ABV38928.1"/>
    <property type="molecule type" value="Genomic_DNA"/>
</dbReference>
<dbReference type="RefSeq" id="WP_012144655.1">
    <property type="nucleotide sequence ID" value="NC_009831.1"/>
</dbReference>
<dbReference type="SMR" id="A8G1F5"/>
<dbReference type="STRING" id="425104.Ssed_4324"/>
<dbReference type="KEGG" id="sse:Ssed_4324"/>
<dbReference type="eggNOG" id="COG0085">
    <property type="taxonomic scope" value="Bacteria"/>
</dbReference>
<dbReference type="HOGENOM" id="CLU_000524_4_3_6"/>
<dbReference type="OrthoDB" id="9803954at2"/>
<dbReference type="Proteomes" id="UP000002015">
    <property type="component" value="Chromosome"/>
</dbReference>
<dbReference type="GO" id="GO:0000428">
    <property type="term" value="C:DNA-directed RNA polymerase complex"/>
    <property type="evidence" value="ECO:0007669"/>
    <property type="project" value="UniProtKB-KW"/>
</dbReference>
<dbReference type="GO" id="GO:0003677">
    <property type="term" value="F:DNA binding"/>
    <property type="evidence" value="ECO:0007669"/>
    <property type="project" value="UniProtKB-UniRule"/>
</dbReference>
<dbReference type="GO" id="GO:0003899">
    <property type="term" value="F:DNA-directed RNA polymerase activity"/>
    <property type="evidence" value="ECO:0007669"/>
    <property type="project" value="UniProtKB-UniRule"/>
</dbReference>
<dbReference type="GO" id="GO:0032549">
    <property type="term" value="F:ribonucleoside binding"/>
    <property type="evidence" value="ECO:0007669"/>
    <property type="project" value="InterPro"/>
</dbReference>
<dbReference type="GO" id="GO:0006351">
    <property type="term" value="P:DNA-templated transcription"/>
    <property type="evidence" value="ECO:0007669"/>
    <property type="project" value="UniProtKB-UniRule"/>
</dbReference>
<dbReference type="CDD" id="cd00653">
    <property type="entry name" value="RNA_pol_B_RPB2"/>
    <property type="match status" value="1"/>
</dbReference>
<dbReference type="FunFam" id="2.40.270.10:FF:000004">
    <property type="entry name" value="DNA-directed RNA polymerase subunit beta"/>
    <property type="match status" value="1"/>
</dbReference>
<dbReference type="FunFam" id="2.40.50.100:FF:000006">
    <property type="entry name" value="DNA-directed RNA polymerase subunit beta"/>
    <property type="match status" value="1"/>
</dbReference>
<dbReference type="FunFam" id="2.40.50.150:FF:000001">
    <property type="entry name" value="DNA-directed RNA polymerase subunit beta"/>
    <property type="match status" value="1"/>
</dbReference>
<dbReference type="FunFam" id="3.90.1100.10:FF:000002">
    <property type="entry name" value="DNA-directed RNA polymerase subunit beta"/>
    <property type="match status" value="1"/>
</dbReference>
<dbReference type="FunFam" id="3.90.1110.10:FF:000001">
    <property type="entry name" value="DNA-directed RNA polymerase subunit beta"/>
    <property type="match status" value="1"/>
</dbReference>
<dbReference type="FunFam" id="3.90.1110.10:FF:000004">
    <property type="entry name" value="DNA-directed RNA polymerase subunit beta"/>
    <property type="match status" value="1"/>
</dbReference>
<dbReference type="FunFam" id="3.90.1800.10:FF:000001">
    <property type="entry name" value="DNA-directed RNA polymerase subunit beta"/>
    <property type="match status" value="1"/>
</dbReference>
<dbReference type="Gene3D" id="2.40.50.100">
    <property type="match status" value="1"/>
</dbReference>
<dbReference type="Gene3D" id="2.40.50.150">
    <property type="match status" value="1"/>
</dbReference>
<dbReference type="Gene3D" id="3.90.1100.10">
    <property type="match status" value="3"/>
</dbReference>
<dbReference type="Gene3D" id="6.10.140.1670">
    <property type="match status" value="1"/>
</dbReference>
<dbReference type="Gene3D" id="2.40.270.10">
    <property type="entry name" value="DNA-directed RNA polymerase, subunit 2, domain 6"/>
    <property type="match status" value="1"/>
</dbReference>
<dbReference type="Gene3D" id="3.90.1800.10">
    <property type="entry name" value="RNA polymerase alpha subunit dimerisation domain"/>
    <property type="match status" value="1"/>
</dbReference>
<dbReference type="Gene3D" id="3.90.1110.10">
    <property type="entry name" value="RNA polymerase Rpb2, domain 2"/>
    <property type="match status" value="1"/>
</dbReference>
<dbReference type="HAMAP" id="MF_01321">
    <property type="entry name" value="RNApol_bact_RpoB"/>
    <property type="match status" value="1"/>
</dbReference>
<dbReference type="InterPro" id="IPR019462">
    <property type="entry name" value="DNA-dir_RNA_pol_bsu_external_1"/>
</dbReference>
<dbReference type="InterPro" id="IPR015712">
    <property type="entry name" value="DNA-dir_RNA_pol_su2"/>
</dbReference>
<dbReference type="InterPro" id="IPR007120">
    <property type="entry name" value="DNA-dir_RNAP_su2_dom"/>
</dbReference>
<dbReference type="InterPro" id="IPR037033">
    <property type="entry name" value="DNA-dir_RNAP_su2_hyb_sf"/>
</dbReference>
<dbReference type="InterPro" id="IPR010243">
    <property type="entry name" value="RNA_pol_bsu_bac"/>
</dbReference>
<dbReference type="InterPro" id="IPR007121">
    <property type="entry name" value="RNA_pol_bsu_CS"/>
</dbReference>
<dbReference type="InterPro" id="IPR007644">
    <property type="entry name" value="RNA_pol_bsu_protrusion"/>
</dbReference>
<dbReference type="InterPro" id="IPR007642">
    <property type="entry name" value="RNA_pol_Rpb2_2"/>
</dbReference>
<dbReference type="InterPro" id="IPR037034">
    <property type="entry name" value="RNA_pol_Rpb2_2_sf"/>
</dbReference>
<dbReference type="InterPro" id="IPR007645">
    <property type="entry name" value="RNA_pol_Rpb2_3"/>
</dbReference>
<dbReference type="InterPro" id="IPR007641">
    <property type="entry name" value="RNA_pol_Rpb2_7"/>
</dbReference>
<dbReference type="InterPro" id="IPR014724">
    <property type="entry name" value="RNA_pol_RPB2_OB-fold"/>
</dbReference>
<dbReference type="NCBIfam" id="NF001616">
    <property type="entry name" value="PRK00405.1"/>
    <property type="match status" value="1"/>
</dbReference>
<dbReference type="NCBIfam" id="TIGR02013">
    <property type="entry name" value="rpoB"/>
    <property type="match status" value="1"/>
</dbReference>
<dbReference type="PANTHER" id="PTHR20856">
    <property type="entry name" value="DNA-DIRECTED RNA POLYMERASE I SUBUNIT 2"/>
    <property type="match status" value="1"/>
</dbReference>
<dbReference type="Pfam" id="PF04563">
    <property type="entry name" value="RNA_pol_Rpb2_1"/>
    <property type="match status" value="1"/>
</dbReference>
<dbReference type="Pfam" id="PF04561">
    <property type="entry name" value="RNA_pol_Rpb2_2"/>
    <property type="match status" value="2"/>
</dbReference>
<dbReference type="Pfam" id="PF04565">
    <property type="entry name" value="RNA_pol_Rpb2_3"/>
    <property type="match status" value="1"/>
</dbReference>
<dbReference type="Pfam" id="PF10385">
    <property type="entry name" value="RNA_pol_Rpb2_45"/>
    <property type="match status" value="1"/>
</dbReference>
<dbReference type="Pfam" id="PF00562">
    <property type="entry name" value="RNA_pol_Rpb2_6"/>
    <property type="match status" value="1"/>
</dbReference>
<dbReference type="Pfam" id="PF04560">
    <property type="entry name" value="RNA_pol_Rpb2_7"/>
    <property type="match status" value="1"/>
</dbReference>
<dbReference type="SUPFAM" id="SSF64484">
    <property type="entry name" value="beta and beta-prime subunits of DNA dependent RNA-polymerase"/>
    <property type="match status" value="1"/>
</dbReference>
<dbReference type="PROSITE" id="PS01166">
    <property type="entry name" value="RNA_POL_BETA"/>
    <property type="match status" value="1"/>
</dbReference>
<proteinExistence type="inferred from homology"/>
<keyword id="KW-0240">DNA-directed RNA polymerase</keyword>
<keyword id="KW-0548">Nucleotidyltransferase</keyword>
<keyword id="KW-1185">Reference proteome</keyword>
<keyword id="KW-0804">Transcription</keyword>
<keyword id="KW-0808">Transferase</keyword>
<accession>A8G1F5</accession>
<evidence type="ECO:0000255" key="1">
    <source>
        <dbReference type="HAMAP-Rule" id="MF_01321"/>
    </source>
</evidence>
<comment type="function">
    <text evidence="1">DNA-dependent RNA polymerase catalyzes the transcription of DNA into RNA using the four ribonucleoside triphosphates as substrates.</text>
</comment>
<comment type="catalytic activity">
    <reaction evidence="1">
        <text>RNA(n) + a ribonucleoside 5'-triphosphate = RNA(n+1) + diphosphate</text>
        <dbReference type="Rhea" id="RHEA:21248"/>
        <dbReference type="Rhea" id="RHEA-COMP:14527"/>
        <dbReference type="Rhea" id="RHEA-COMP:17342"/>
        <dbReference type="ChEBI" id="CHEBI:33019"/>
        <dbReference type="ChEBI" id="CHEBI:61557"/>
        <dbReference type="ChEBI" id="CHEBI:140395"/>
        <dbReference type="EC" id="2.7.7.6"/>
    </reaction>
</comment>
<comment type="subunit">
    <text evidence="1">The RNAP catalytic core consists of 2 alpha, 1 beta, 1 beta' and 1 omega subunit. When a sigma factor is associated with the core the holoenzyme is formed, which can initiate transcription.</text>
</comment>
<comment type="similarity">
    <text evidence="1">Belongs to the RNA polymerase beta chain family.</text>
</comment>
<organism>
    <name type="scientific">Shewanella sediminis (strain HAW-EB3)</name>
    <dbReference type="NCBI Taxonomy" id="425104"/>
    <lineage>
        <taxon>Bacteria</taxon>
        <taxon>Pseudomonadati</taxon>
        <taxon>Pseudomonadota</taxon>
        <taxon>Gammaproteobacteria</taxon>
        <taxon>Alteromonadales</taxon>
        <taxon>Shewanellaceae</taxon>
        <taxon>Shewanella</taxon>
    </lineage>
</organism>
<sequence>MVYSYSEKKRIRKDFGKRPQVLDIPYLLSIQLDSFKKFTDQDPTGERGFEAAFRSVFPIKSFSGNSELQYVSYKLGEPVFDVKECQIRGVTYSAPLRVKLRMVLYDREAAPGTVKDIKEQEVYMGDIPMMTDNGTFVINGTERVIVSQLHRSPGVFFDHDRGKTHSSGKVLYNARIIPYRGSWLDFEFDPKDALFVRIDRRRKLAASIILRALDYSTQDILDLFFDRVNFKIKKDSLVMDLVAERLRGETASYDIKDSEGSILVEKGRRITARHIRQLEKTNTTELEVPVDYISGKISGQDYIDPDTGEVLVSANAEISLEDLAKLSLAGIKEISTLYINELDNGAYMSDTLRIDSTTNRLEALVEIYRMMRPGEPPTKDAAEALFQNLFFSEERYDLSKVGRMKFNRRLSIDDDEGTGILSKEDIVAVMKNIITIRNGNDEVDDIDHLGNRRIRSVGEMAENQFRVGLVRVERAVRERLSLGDLNELMPQDLINAKPISAAVKEFFGSSQLSQFMDQNNPLSEVTHKRRISALGPGGLTRERAGFEVRDVHPTHYGRLCPIETPEGPNIGLINSLASFARTNSYGFLETPYRKVIDGVVTDQVDYLSAIEEGRYVIAQAIVDLDADGRMMDELIACRHKGDSTFMGAGDIQYMDVSPQQIISVAASLIPFLEHDDANRALMGANMQRQAVPTLKADKPLVGTGIERTLAVDSGVVVAAKRGGYVDYVDASRIVVKVNESELTPGEAGIDIYNLTKYTRSNQNTCINQRPCCSMGDPVVRGDVLADGPSTDLGDLALGQNMRIAFMPWNGYNFEDSILISERVAMEDRFTTIHIQELSCIARDTKLGSEEITADIPNVGESALSKLDESGIVYIGAEVKGGDILVGKVTPKGETQLTPEEKLLRAIFGEKASDVKDSSLRVPNSVKGTIIDVQVFTRDGVEKDKRAVEIEEMHVGQAKKDLSEEFQILEEGVYGRARNLLLNAGFTEDQLATIPRSQLLVQTIDDEAKQTELEQLAEQHDELKADFDKKFEIKRRKITQGDDLAPGVLKIVKVYLAVKRTIQPGDKMAGRHGNKGVISKINPVEDMPYDENGNPIDIVLNPLGVPSRMNIGQVLEVHMGAAAKGIGDRITAMLEEQRELAELRGYIKEVYELGEEVQQRVDIDSFTDDEVLRLAKNLKGGVPTATPAFDGAKEKEIKEMLALAGLPTSGQRRLFDGRTGDEFERQVTVGYMYMLKLNHLVDDKMHARSTGSYSLVTQQPLGGKAQFGGQRFGEMEVWALEAYGAAYTLQEMLTVKSDDVNGRTHMYKNIVDGNHQMQPGMPESFNVLLKEIRSLGINIELDQD</sequence>